<evidence type="ECO:0000250" key="1"/>
<evidence type="ECO:0000255" key="2">
    <source>
        <dbReference type="HAMAP-Rule" id="MF_00610"/>
    </source>
</evidence>
<geneLocation type="chloroplast"/>
<reference key="1">
    <citation type="journal article" date="2006" name="BMC Evol. Biol.">
        <title>Complete plastid genome sequences of Drimys, Liriodendron, and Piper: implications for the phylogenetic relationships of magnoliids.</title>
        <authorList>
            <person name="Cai Z."/>
            <person name="Penaflor C."/>
            <person name="Kuehl J.V."/>
            <person name="Leebens-Mack J."/>
            <person name="Carlson J.E."/>
            <person name="dePamphilis C.W."/>
            <person name="Boore J.L."/>
            <person name="Jansen R.K."/>
        </authorList>
    </citation>
    <scope>NUCLEOTIDE SEQUENCE [LARGE SCALE GENOMIC DNA]</scope>
</reference>
<comment type="function">
    <text evidence="2">Component of the cytochrome b6-f complex, which mediates electron transfer between photosystem II (PSII) and photosystem I (PSI), cyclic electron flow around PSI, and state transitions.</text>
</comment>
<comment type="cofactor">
    <cofactor evidence="2">
        <name>heme</name>
        <dbReference type="ChEBI" id="CHEBI:30413"/>
    </cofactor>
    <text evidence="2">Binds 1 heme group covalently.</text>
</comment>
<comment type="subunit">
    <text evidence="1">The 4 large subunits of the cytochrome b6-f complex are cytochrome b6, subunit IV (17 kDa polypeptide, petD), cytochrome f and the Rieske protein, while the 4 small subunits are PetG, PetL, PetM and PetN. The complex functions as a dimer (By similarity).</text>
</comment>
<comment type="subcellular location">
    <subcellularLocation>
        <location evidence="2">Plastid</location>
        <location evidence="2">Chloroplast thylakoid membrane</location>
        <topology evidence="2">Single-pass membrane protein</topology>
    </subcellularLocation>
</comment>
<comment type="similarity">
    <text evidence="2">Belongs to the cytochrome f family.</text>
</comment>
<sequence>MQNRNTFSWVKEQMTRFISVSIMIYVITRTSISNAYPIFAQQGYENPREATGRIVCANCHLANKPVDIEVPQAVLPDTVFEAVVRIPYDMQLKQVLANGKKGALNVGAVLILPEGFELAPPDRISPEMKEKIGNLSFQSYRPTKRNILVVGPVPGQKYSEIVFPILSPDPATKKDVHFLKYPIYVGGNRGRGQIYPDGNKSNNTVYNATAAGIVNRIVRKEKGGYEITIADASDGHQVVDIIPPGPELLVSEGESIKLDQPLTSNPNVGGFGQGDAEIVLQDPLRVQGLLFFLASVILAQIFLVLKKKQFEKVQLSEMNF</sequence>
<proteinExistence type="inferred from homology"/>
<feature type="signal peptide" evidence="2">
    <location>
        <begin position="1"/>
        <end position="35"/>
    </location>
</feature>
<feature type="chain" id="PRO_0000275425" description="Cytochrome f">
    <location>
        <begin position="36"/>
        <end position="320"/>
    </location>
</feature>
<feature type="transmembrane region" description="Helical" evidence="2">
    <location>
        <begin position="286"/>
        <end position="306"/>
    </location>
</feature>
<feature type="binding site" description="axial binding residue" evidence="2">
    <location>
        <position position="36"/>
    </location>
    <ligand>
        <name>heme</name>
        <dbReference type="ChEBI" id="CHEBI:30413"/>
    </ligand>
    <ligandPart>
        <name>Fe</name>
        <dbReference type="ChEBI" id="CHEBI:18248"/>
    </ligandPart>
</feature>
<feature type="binding site" description="covalent" evidence="2">
    <location>
        <position position="56"/>
    </location>
    <ligand>
        <name>heme</name>
        <dbReference type="ChEBI" id="CHEBI:30413"/>
    </ligand>
</feature>
<feature type="binding site" description="covalent" evidence="2">
    <location>
        <position position="59"/>
    </location>
    <ligand>
        <name>heme</name>
        <dbReference type="ChEBI" id="CHEBI:30413"/>
    </ligand>
</feature>
<feature type="binding site" description="axial binding residue" evidence="2">
    <location>
        <position position="60"/>
    </location>
    <ligand>
        <name>heme</name>
        <dbReference type="ChEBI" id="CHEBI:30413"/>
    </ligand>
    <ligandPart>
        <name>Fe</name>
        <dbReference type="ChEBI" id="CHEBI:18248"/>
    </ligandPart>
</feature>
<protein>
    <recommendedName>
        <fullName evidence="2">Cytochrome f</fullName>
    </recommendedName>
</protein>
<name>CYF_LIRTU</name>
<gene>
    <name evidence="2" type="primary">petA</name>
</gene>
<organism>
    <name type="scientific">Liriodendron tulipifera</name>
    <name type="common">Tuliptree</name>
    <name type="synonym">Tulip poplar</name>
    <dbReference type="NCBI Taxonomy" id="3415"/>
    <lineage>
        <taxon>Eukaryota</taxon>
        <taxon>Viridiplantae</taxon>
        <taxon>Streptophyta</taxon>
        <taxon>Embryophyta</taxon>
        <taxon>Tracheophyta</taxon>
        <taxon>Spermatophyta</taxon>
        <taxon>Magnoliopsida</taxon>
        <taxon>Magnoliidae</taxon>
        <taxon>Magnoliales</taxon>
        <taxon>Magnoliaceae</taxon>
        <taxon>Liriodendron</taxon>
    </lineage>
</organism>
<dbReference type="EMBL" id="DQ899947">
    <property type="protein sequence ID" value="ABI32522.1"/>
    <property type="molecule type" value="Genomic_DNA"/>
</dbReference>
<dbReference type="RefSeq" id="YP_740215.1">
    <property type="nucleotide sequence ID" value="NC_008326.1"/>
</dbReference>
<dbReference type="SMR" id="Q0G9K6"/>
<dbReference type="GeneID" id="4266637"/>
<dbReference type="GO" id="GO:0009535">
    <property type="term" value="C:chloroplast thylakoid membrane"/>
    <property type="evidence" value="ECO:0007669"/>
    <property type="project" value="UniProtKB-SubCell"/>
</dbReference>
<dbReference type="GO" id="GO:0009055">
    <property type="term" value="F:electron transfer activity"/>
    <property type="evidence" value="ECO:0007669"/>
    <property type="project" value="UniProtKB-UniRule"/>
</dbReference>
<dbReference type="GO" id="GO:0020037">
    <property type="term" value="F:heme binding"/>
    <property type="evidence" value="ECO:0007669"/>
    <property type="project" value="InterPro"/>
</dbReference>
<dbReference type="GO" id="GO:0005506">
    <property type="term" value="F:iron ion binding"/>
    <property type="evidence" value="ECO:0007669"/>
    <property type="project" value="InterPro"/>
</dbReference>
<dbReference type="GO" id="GO:0015979">
    <property type="term" value="P:photosynthesis"/>
    <property type="evidence" value="ECO:0007669"/>
    <property type="project" value="UniProtKB-UniRule"/>
</dbReference>
<dbReference type="FunFam" id="1.20.5.700:FF:000001">
    <property type="entry name" value="Cytochrome f"/>
    <property type="match status" value="1"/>
</dbReference>
<dbReference type="FunFam" id="2.40.50.100:FF:000007">
    <property type="entry name" value="Cytochrome f"/>
    <property type="match status" value="1"/>
</dbReference>
<dbReference type="FunFam" id="2.60.40.830:FF:000001">
    <property type="entry name" value="Cytochrome f"/>
    <property type="match status" value="1"/>
</dbReference>
<dbReference type="Gene3D" id="2.40.50.100">
    <property type="match status" value="1"/>
</dbReference>
<dbReference type="Gene3D" id="2.60.40.830">
    <property type="entry name" value="Cytochrome f large domain"/>
    <property type="match status" value="1"/>
</dbReference>
<dbReference type="Gene3D" id="1.20.5.700">
    <property type="entry name" value="Single helix bin"/>
    <property type="match status" value="1"/>
</dbReference>
<dbReference type="HAMAP" id="MF_00610">
    <property type="entry name" value="Cytb6_f_cytF"/>
    <property type="match status" value="1"/>
</dbReference>
<dbReference type="InterPro" id="IPR024058">
    <property type="entry name" value="Cyt-f_TM"/>
</dbReference>
<dbReference type="InterPro" id="IPR002325">
    <property type="entry name" value="Cyt_f"/>
</dbReference>
<dbReference type="InterPro" id="IPR024094">
    <property type="entry name" value="Cyt_f_lg_dom"/>
</dbReference>
<dbReference type="InterPro" id="IPR036826">
    <property type="entry name" value="Cyt_f_lg_dom_sf"/>
</dbReference>
<dbReference type="InterPro" id="IPR011054">
    <property type="entry name" value="Rudment_hybrid_motif"/>
</dbReference>
<dbReference type="PANTHER" id="PTHR33288">
    <property type="match status" value="1"/>
</dbReference>
<dbReference type="PANTHER" id="PTHR33288:SF10">
    <property type="entry name" value="CYTOCHROME F"/>
    <property type="match status" value="1"/>
</dbReference>
<dbReference type="Pfam" id="PF01333">
    <property type="entry name" value="Apocytochr_F_C"/>
    <property type="match status" value="1"/>
</dbReference>
<dbReference type="Pfam" id="PF16639">
    <property type="entry name" value="Apocytochr_F_N"/>
    <property type="match status" value="1"/>
</dbReference>
<dbReference type="PRINTS" id="PR00610">
    <property type="entry name" value="CYTOCHROMEF"/>
</dbReference>
<dbReference type="SUPFAM" id="SSF103431">
    <property type="entry name" value="Cytochrome f subunit of the cytochrome b6f complex, transmembrane anchor"/>
    <property type="match status" value="1"/>
</dbReference>
<dbReference type="SUPFAM" id="SSF49441">
    <property type="entry name" value="Cytochrome f, large domain"/>
    <property type="match status" value="1"/>
</dbReference>
<dbReference type="SUPFAM" id="SSF51246">
    <property type="entry name" value="Rudiment single hybrid motif"/>
    <property type="match status" value="1"/>
</dbReference>
<dbReference type="PROSITE" id="PS51010">
    <property type="entry name" value="CYTF"/>
    <property type="match status" value="1"/>
</dbReference>
<accession>Q0G9K6</accession>
<keyword id="KW-0150">Chloroplast</keyword>
<keyword id="KW-0249">Electron transport</keyword>
<keyword id="KW-0349">Heme</keyword>
<keyword id="KW-0408">Iron</keyword>
<keyword id="KW-0472">Membrane</keyword>
<keyword id="KW-0479">Metal-binding</keyword>
<keyword id="KW-0602">Photosynthesis</keyword>
<keyword id="KW-0934">Plastid</keyword>
<keyword id="KW-0732">Signal</keyword>
<keyword id="KW-0793">Thylakoid</keyword>
<keyword id="KW-0812">Transmembrane</keyword>
<keyword id="KW-1133">Transmembrane helix</keyword>
<keyword id="KW-0813">Transport</keyword>